<evidence type="ECO:0000255" key="1">
    <source>
        <dbReference type="HAMAP-Rule" id="MF_01006"/>
    </source>
</evidence>
<keyword id="KW-0046">Antibiotic resistance</keyword>
<keyword id="KW-1003">Cell membrane</keyword>
<keyword id="KW-0133">Cell shape</keyword>
<keyword id="KW-0961">Cell wall biogenesis/degradation</keyword>
<keyword id="KW-0378">Hydrolase</keyword>
<keyword id="KW-0472">Membrane</keyword>
<keyword id="KW-0573">Peptidoglycan synthesis</keyword>
<keyword id="KW-1185">Reference proteome</keyword>
<keyword id="KW-0812">Transmembrane</keyword>
<keyword id="KW-1133">Transmembrane helix</keyword>
<organism>
    <name type="scientific">Stenotrophomonas maltophilia (strain K279a)</name>
    <dbReference type="NCBI Taxonomy" id="522373"/>
    <lineage>
        <taxon>Bacteria</taxon>
        <taxon>Pseudomonadati</taxon>
        <taxon>Pseudomonadota</taxon>
        <taxon>Gammaproteobacteria</taxon>
        <taxon>Lysobacterales</taxon>
        <taxon>Lysobacteraceae</taxon>
        <taxon>Stenotrophomonas</taxon>
        <taxon>Stenotrophomonas maltophilia group</taxon>
    </lineage>
</organism>
<feature type="chain" id="PRO_1000197407" description="Undecaprenyl-diphosphatase">
    <location>
        <begin position="1"/>
        <end position="264"/>
    </location>
</feature>
<feature type="transmembrane region" description="Helical" evidence="1">
    <location>
        <begin position="38"/>
        <end position="58"/>
    </location>
</feature>
<feature type="transmembrane region" description="Helical" evidence="1">
    <location>
        <begin position="75"/>
        <end position="95"/>
    </location>
</feature>
<feature type="transmembrane region" description="Helical" evidence="1">
    <location>
        <begin position="106"/>
        <end position="126"/>
    </location>
</feature>
<feature type="transmembrane region" description="Helical" evidence="1">
    <location>
        <begin position="136"/>
        <end position="156"/>
    </location>
</feature>
<feature type="transmembrane region" description="Helical" evidence="1">
    <location>
        <begin position="181"/>
        <end position="201"/>
    </location>
</feature>
<feature type="transmembrane region" description="Helical" evidence="1">
    <location>
        <begin position="217"/>
        <end position="237"/>
    </location>
</feature>
<feature type="transmembrane region" description="Helical" evidence="1">
    <location>
        <begin position="242"/>
        <end position="262"/>
    </location>
</feature>
<accession>B2FHB6</accession>
<sequence length="264" mass="28216">MSDLLSALLLGILEGLTEFLPISSTGHLLIAQHWLGARSDFFNIVIQAGAIVAVVLVFRQRLLQLATGFNQRGNREYVFKLGAAFLVTAVVGLVVRKAGWSLPETVSPVAWALIIGGVWMLLVEAYTARLPDRDQVTWTVAIGVGLAQVVAGVFPGTSRSASAIFLAMLLGLSRRAAAAEFVFLVGIPTMFAASAYTFLEMAKAGQLGSEDWADVGVAFLAAAITGFVVVKWLMGYIKSHRFTAFAIYRIALGAALLLWLPSGS</sequence>
<reference key="1">
    <citation type="journal article" date="2008" name="Genome Biol.">
        <title>The complete genome, comparative and functional analysis of Stenotrophomonas maltophilia reveals an organism heavily shielded by drug resistance determinants.</title>
        <authorList>
            <person name="Crossman L.C."/>
            <person name="Gould V.C."/>
            <person name="Dow J.M."/>
            <person name="Vernikos G.S."/>
            <person name="Okazaki A."/>
            <person name="Sebaihia M."/>
            <person name="Saunders D."/>
            <person name="Arrowsmith C."/>
            <person name="Carver T."/>
            <person name="Peters N."/>
            <person name="Adlem E."/>
            <person name="Kerhornou A."/>
            <person name="Lord A."/>
            <person name="Murphy L."/>
            <person name="Seeger K."/>
            <person name="Squares R."/>
            <person name="Rutter S."/>
            <person name="Quail M.A."/>
            <person name="Rajandream M.A."/>
            <person name="Harris D."/>
            <person name="Churcher C."/>
            <person name="Bentley S.D."/>
            <person name="Parkhill J."/>
            <person name="Thomson N.R."/>
            <person name="Avison M.B."/>
        </authorList>
    </citation>
    <scope>NUCLEOTIDE SEQUENCE [LARGE SCALE GENOMIC DNA]</scope>
    <source>
        <strain>K279a</strain>
    </source>
</reference>
<gene>
    <name evidence="1" type="primary">uppP</name>
    <name type="ordered locus">Smlt0150</name>
</gene>
<name>UPPP_STRMK</name>
<proteinExistence type="inferred from homology"/>
<comment type="function">
    <text evidence="1">Catalyzes the dephosphorylation of undecaprenyl diphosphate (UPP). Confers resistance to bacitracin.</text>
</comment>
<comment type="catalytic activity">
    <reaction evidence="1">
        <text>di-trans,octa-cis-undecaprenyl diphosphate + H2O = di-trans,octa-cis-undecaprenyl phosphate + phosphate + H(+)</text>
        <dbReference type="Rhea" id="RHEA:28094"/>
        <dbReference type="ChEBI" id="CHEBI:15377"/>
        <dbReference type="ChEBI" id="CHEBI:15378"/>
        <dbReference type="ChEBI" id="CHEBI:43474"/>
        <dbReference type="ChEBI" id="CHEBI:58405"/>
        <dbReference type="ChEBI" id="CHEBI:60392"/>
        <dbReference type="EC" id="3.6.1.27"/>
    </reaction>
</comment>
<comment type="subcellular location">
    <subcellularLocation>
        <location evidence="1">Cell membrane</location>
        <topology evidence="1">Multi-pass membrane protein</topology>
    </subcellularLocation>
</comment>
<comment type="miscellaneous">
    <text>Bacitracin is thought to be involved in the inhibition of peptidoglycan synthesis by sequestering undecaprenyl diphosphate, thereby reducing the pool of lipid carrier available.</text>
</comment>
<comment type="similarity">
    <text evidence="1">Belongs to the UppP family.</text>
</comment>
<protein>
    <recommendedName>
        <fullName evidence="1">Undecaprenyl-diphosphatase</fullName>
        <ecNumber evidence="1">3.6.1.27</ecNumber>
    </recommendedName>
    <alternativeName>
        <fullName evidence="1">Bacitracin resistance protein</fullName>
    </alternativeName>
    <alternativeName>
        <fullName evidence="1">Undecaprenyl pyrophosphate phosphatase</fullName>
    </alternativeName>
</protein>
<dbReference type="EC" id="3.6.1.27" evidence="1"/>
<dbReference type="EMBL" id="AM743169">
    <property type="protein sequence ID" value="CAQ43759.1"/>
    <property type="molecule type" value="Genomic_DNA"/>
</dbReference>
<dbReference type="RefSeq" id="WP_012478726.1">
    <property type="nucleotide sequence ID" value="NC_010943.1"/>
</dbReference>
<dbReference type="SMR" id="B2FHB6"/>
<dbReference type="EnsemblBacteria" id="CAQ43759">
    <property type="protein sequence ID" value="CAQ43759"/>
    <property type="gene ID" value="Smlt0150"/>
</dbReference>
<dbReference type="KEGG" id="sml:Smlt0150"/>
<dbReference type="PATRIC" id="fig|522373.3.peg.139"/>
<dbReference type="eggNOG" id="COG1968">
    <property type="taxonomic scope" value="Bacteria"/>
</dbReference>
<dbReference type="HOGENOM" id="CLU_060296_2_0_6"/>
<dbReference type="Proteomes" id="UP000008840">
    <property type="component" value="Chromosome"/>
</dbReference>
<dbReference type="GO" id="GO:0005886">
    <property type="term" value="C:plasma membrane"/>
    <property type="evidence" value="ECO:0007669"/>
    <property type="project" value="UniProtKB-SubCell"/>
</dbReference>
<dbReference type="GO" id="GO:0050380">
    <property type="term" value="F:undecaprenyl-diphosphatase activity"/>
    <property type="evidence" value="ECO:0007669"/>
    <property type="project" value="UniProtKB-UniRule"/>
</dbReference>
<dbReference type="GO" id="GO:0071555">
    <property type="term" value="P:cell wall organization"/>
    <property type="evidence" value="ECO:0007669"/>
    <property type="project" value="UniProtKB-KW"/>
</dbReference>
<dbReference type="GO" id="GO:0009252">
    <property type="term" value="P:peptidoglycan biosynthetic process"/>
    <property type="evidence" value="ECO:0007669"/>
    <property type="project" value="UniProtKB-KW"/>
</dbReference>
<dbReference type="GO" id="GO:0008360">
    <property type="term" value="P:regulation of cell shape"/>
    <property type="evidence" value="ECO:0007669"/>
    <property type="project" value="UniProtKB-KW"/>
</dbReference>
<dbReference type="GO" id="GO:0046677">
    <property type="term" value="P:response to antibiotic"/>
    <property type="evidence" value="ECO:0007669"/>
    <property type="project" value="UniProtKB-UniRule"/>
</dbReference>
<dbReference type="HAMAP" id="MF_01006">
    <property type="entry name" value="Undec_diphosphatase"/>
    <property type="match status" value="1"/>
</dbReference>
<dbReference type="InterPro" id="IPR003824">
    <property type="entry name" value="UppP"/>
</dbReference>
<dbReference type="NCBIfam" id="NF001390">
    <property type="entry name" value="PRK00281.1-4"/>
    <property type="match status" value="1"/>
</dbReference>
<dbReference type="PANTHER" id="PTHR30622">
    <property type="entry name" value="UNDECAPRENYL-DIPHOSPHATASE"/>
    <property type="match status" value="1"/>
</dbReference>
<dbReference type="PANTHER" id="PTHR30622:SF3">
    <property type="entry name" value="UNDECAPRENYL-DIPHOSPHATASE"/>
    <property type="match status" value="1"/>
</dbReference>
<dbReference type="Pfam" id="PF02673">
    <property type="entry name" value="BacA"/>
    <property type="match status" value="1"/>
</dbReference>